<feature type="chain" id="PRO_1000147476" description="Putative pre-16S rRNA nuclease">
    <location>
        <begin position="1"/>
        <end position="141"/>
    </location>
</feature>
<protein>
    <recommendedName>
        <fullName evidence="1">Putative pre-16S rRNA nuclease</fullName>
        <ecNumber evidence="1">3.1.-.-</ecNumber>
    </recommendedName>
</protein>
<proteinExistence type="inferred from homology"/>
<evidence type="ECO:0000255" key="1">
    <source>
        <dbReference type="HAMAP-Rule" id="MF_00651"/>
    </source>
</evidence>
<gene>
    <name type="ordered locus">RALTA_A2396</name>
</gene>
<accession>B3R605</accession>
<dbReference type="EC" id="3.1.-.-" evidence="1"/>
<dbReference type="EMBL" id="CU633749">
    <property type="protein sequence ID" value="CAQ70330.1"/>
    <property type="molecule type" value="Genomic_DNA"/>
</dbReference>
<dbReference type="SMR" id="B3R605"/>
<dbReference type="GeneID" id="29760296"/>
<dbReference type="KEGG" id="cti:RALTA_A2396"/>
<dbReference type="eggNOG" id="COG0816">
    <property type="taxonomic scope" value="Bacteria"/>
</dbReference>
<dbReference type="HOGENOM" id="CLU_098240_3_2_4"/>
<dbReference type="BioCyc" id="CTAI977880:RALTA_RS11645-MONOMER"/>
<dbReference type="Proteomes" id="UP000001692">
    <property type="component" value="Chromosome 1"/>
</dbReference>
<dbReference type="GO" id="GO:0005829">
    <property type="term" value="C:cytosol"/>
    <property type="evidence" value="ECO:0007669"/>
    <property type="project" value="TreeGrafter"/>
</dbReference>
<dbReference type="GO" id="GO:0004518">
    <property type="term" value="F:nuclease activity"/>
    <property type="evidence" value="ECO:0007669"/>
    <property type="project" value="UniProtKB-KW"/>
</dbReference>
<dbReference type="GO" id="GO:0000967">
    <property type="term" value="P:rRNA 5'-end processing"/>
    <property type="evidence" value="ECO:0007669"/>
    <property type="project" value="UniProtKB-UniRule"/>
</dbReference>
<dbReference type="CDD" id="cd16964">
    <property type="entry name" value="YqgF"/>
    <property type="match status" value="1"/>
</dbReference>
<dbReference type="Gene3D" id="3.30.420.140">
    <property type="entry name" value="YqgF/RNase H-like domain"/>
    <property type="match status" value="1"/>
</dbReference>
<dbReference type="HAMAP" id="MF_00651">
    <property type="entry name" value="Nuclease_YqgF"/>
    <property type="match status" value="1"/>
</dbReference>
<dbReference type="InterPro" id="IPR012337">
    <property type="entry name" value="RNaseH-like_sf"/>
</dbReference>
<dbReference type="InterPro" id="IPR005227">
    <property type="entry name" value="YqgF"/>
</dbReference>
<dbReference type="InterPro" id="IPR006641">
    <property type="entry name" value="YqgF/RNaseH-like_dom"/>
</dbReference>
<dbReference type="InterPro" id="IPR037027">
    <property type="entry name" value="YqgF/RNaseH-like_dom_sf"/>
</dbReference>
<dbReference type="NCBIfam" id="TIGR00250">
    <property type="entry name" value="RNAse_H_YqgF"/>
    <property type="match status" value="1"/>
</dbReference>
<dbReference type="PANTHER" id="PTHR33317">
    <property type="entry name" value="POLYNUCLEOTIDYL TRANSFERASE, RIBONUCLEASE H-LIKE SUPERFAMILY PROTEIN"/>
    <property type="match status" value="1"/>
</dbReference>
<dbReference type="PANTHER" id="PTHR33317:SF4">
    <property type="entry name" value="POLYNUCLEOTIDYL TRANSFERASE, RIBONUCLEASE H-LIKE SUPERFAMILY PROTEIN"/>
    <property type="match status" value="1"/>
</dbReference>
<dbReference type="Pfam" id="PF03652">
    <property type="entry name" value="RuvX"/>
    <property type="match status" value="1"/>
</dbReference>
<dbReference type="SMART" id="SM00732">
    <property type="entry name" value="YqgFc"/>
    <property type="match status" value="1"/>
</dbReference>
<dbReference type="SUPFAM" id="SSF53098">
    <property type="entry name" value="Ribonuclease H-like"/>
    <property type="match status" value="1"/>
</dbReference>
<name>YQGF_CUPTR</name>
<reference key="1">
    <citation type="journal article" date="2008" name="Genome Res.">
        <title>Genome sequence of the beta-rhizobium Cupriavidus taiwanensis and comparative genomics of rhizobia.</title>
        <authorList>
            <person name="Amadou C."/>
            <person name="Pascal G."/>
            <person name="Mangenot S."/>
            <person name="Glew M."/>
            <person name="Bontemps C."/>
            <person name="Capela D."/>
            <person name="Carrere S."/>
            <person name="Cruveiller S."/>
            <person name="Dossat C."/>
            <person name="Lajus A."/>
            <person name="Marchetti M."/>
            <person name="Poinsot V."/>
            <person name="Rouy Z."/>
            <person name="Servin B."/>
            <person name="Saad M."/>
            <person name="Schenowitz C."/>
            <person name="Barbe V."/>
            <person name="Batut J."/>
            <person name="Medigue C."/>
            <person name="Masson-Boivin C."/>
        </authorList>
    </citation>
    <scope>NUCLEOTIDE SEQUENCE [LARGE SCALE GENOMIC DNA]</scope>
    <source>
        <strain>DSM 17343 / BCRC 17206 / CCUG 44338 / CIP 107171 / LMG 19424 / R1</strain>
    </source>
</reference>
<comment type="function">
    <text evidence="1">Could be a nuclease involved in processing of the 5'-end of pre-16S rRNA.</text>
</comment>
<comment type="subcellular location">
    <subcellularLocation>
        <location evidence="1">Cytoplasm</location>
    </subcellularLocation>
</comment>
<comment type="similarity">
    <text evidence="1">Belongs to the YqgF nuclease family.</text>
</comment>
<keyword id="KW-0963">Cytoplasm</keyword>
<keyword id="KW-0378">Hydrolase</keyword>
<keyword id="KW-0540">Nuclease</keyword>
<keyword id="KW-0690">Ribosome biogenesis</keyword>
<sequence>MPDAVGRELPRDGTVLAFDYGEKKIGVALGNFITREARALTILPNITVEGRFEAVAALIQAWNPVQLIVGMPVNPEGGEQPSMKLARRFGNQLNGRFGLPVEWVDERYTSRAASMAGARRGELDAEAARIILQQYFDQFPL</sequence>
<organism>
    <name type="scientific">Cupriavidus taiwanensis (strain DSM 17343 / BCRC 17206 / CCUG 44338 / CIP 107171 / LMG 19424 / R1)</name>
    <name type="common">Ralstonia taiwanensis (strain LMG 19424)</name>
    <dbReference type="NCBI Taxonomy" id="977880"/>
    <lineage>
        <taxon>Bacteria</taxon>
        <taxon>Pseudomonadati</taxon>
        <taxon>Pseudomonadota</taxon>
        <taxon>Betaproteobacteria</taxon>
        <taxon>Burkholderiales</taxon>
        <taxon>Burkholderiaceae</taxon>
        <taxon>Cupriavidus</taxon>
    </lineage>
</organism>